<name>GEFE_DICDI</name>
<organism>
    <name type="scientific">Dictyostelium discoideum</name>
    <name type="common">Social amoeba</name>
    <dbReference type="NCBI Taxonomy" id="44689"/>
    <lineage>
        <taxon>Eukaryota</taxon>
        <taxon>Amoebozoa</taxon>
        <taxon>Evosea</taxon>
        <taxon>Eumycetozoa</taxon>
        <taxon>Dictyostelia</taxon>
        <taxon>Dictyosteliales</taxon>
        <taxon>Dictyosteliaceae</taxon>
        <taxon>Dictyostelium</taxon>
    </lineage>
</organism>
<comment type="function">
    <text evidence="1 7">Promotes the exchange of Ras-bound GDP by GTP (By similarity). Seems to play a role in chemotaxis.</text>
</comment>
<comment type="developmental stage">
    <text evidence="6">Expressed during development; especially from 12 hours of development.</text>
</comment>
<comment type="disruption phenotype">
    <text evidence="6">Poor in phototaxis assays.</text>
</comment>
<proteinExistence type="evidence at transcript level"/>
<evidence type="ECO:0000250" key="1"/>
<evidence type="ECO:0000255" key="2"/>
<evidence type="ECO:0000255" key="3">
    <source>
        <dbReference type="PROSITE-ProRule" id="PRU00135"/>
    </source>
</evidence>
<evidence type="ECO:0000255" key="4">
    <source>
        <dbReference type="PROSITE-ProRule" id="PRU00168"/>
    </source>
</evidence>
<evidence type="ECO:0000256" key="5">
    <source>
        <dbReference type="SAM" id="MobiDB-lite"/>
    </source>
</evidence>
<evidence type="ECO:0000269" key="6">
    <source>
    </source>
</evidence>
<evidence type="ECO:0000269" key="7">
    <source>
    </source>
</evidence>
<sequence length="1037" mass="114738">MDHTECNNRIEYLQNKVLELESLNENLKGQLEYFQTKFLESNLNSEGKDISSCLTEIYNSLSLDNNNNNSNSNSNSNNNSSNSNNNSYSNFNSNNNTTNNTKVIKNRNFKINLTNSNSTNSSPYIFGNNKDNSNNSNNSNNNNSNTELSNDHLSLEDNIATTNTTTTTTINTSNSNNSNNNNNNNNNNNNNNNNNNNNNNKPTSNRPPVAPRSFIRSNSDTFITPPGSPTSSRNSPTNKSSPQFLSPLSKSPLSQSTQSTTVSSPSPSWTTTVPQSKMRSETIVQSKSPYSPDTNISNKLINELASNIGAPNSNGSESPSKNSPRSLNSNNNNSSATTSITTPPTTSTPTPTTSTTTTTTTERRPEDRRSKTSPFPNVGTTTPPLSNSAHLVRTQSASGANAVKPQSQLSTSCTVNMIGGGGTPRSNNSSNGSLYHSMSSNGLIENLSTSSSLSLSSTSPSPNNSQQNLTNPFEIGADDELEVLDDPRLVMVKTENGFIVKGGTIEKLVNRLIAKHDPDFTSAFLLTHKSFTTSIELLDLLIEFYVNNKDSSSINSNSSSSSSSAVASSSFSNINCNISDLSSSTSSTNSLLINSITNSPIINSNNQNNQNNNNNNNNNNNNNNNQLEINGDKKKKAIRLKITNVIKSWVDKHYYDFSEDKQLTLKLDQFITNHIMFDMDKIGFNLKRLLTNDRVVPVPTFTQGPPTPIPPKMKSNGSEINFKDLDPTEIARQLTLYESDLFRKIGAKECLGQAWNKDGKEENAPNIVSFIKRFNQVSSWVATEIVRQEKLKDRVSYIKRFILVAQECRKLNNFNATMEILSGLQNSSVYRLRKTWERVESKPLLKNTLDELMSLMSSGANYKNYIQELHNIHPPCIPYLGVYLTHLTFIEDGMKNVLTTTTATTTNTTTTTTTTTTTTTTNTTTSNNNNQQQLNGANRSFDDVIINFEKCRKISVVIREIKQYQQQQYHLHTEEFTLRYLSNLPSIQTQKSMYKLSLICEPKEKETSSFDSGYGSVSDRPSKKEFSVTSLLNSFKS</sequence>
<feature type="chain" id="PRO_0000384463" description="Ras guanine nucleotide exchange factor E">
    <location>
        <begin position="1"/>
        <end position="1037"/>
    </location>
</feature>
<feature type="domain" description="N-terminal Ras-GEF" evidence="3">
    <location>
        <begin position="496"/>
        <end position="694"/>
    </location>
</feature>
<feature type="domain" description="Ras-GEF" evidence="4">
    <location>
        <begin position="726"/>
        <end position="1003"/>
    </location>
</feature>
<feature type="region of interest" description="Disordered" evidence="5">
    <location>
        <begin position="65"/>
        <end position="100"/>
    </location>
</feature>
<feature type="region of interest" description="Disordered" evidence="5">
    <location>
        <begin position="114"/>
        <end position="150"/>
    </location>
</feature>
<feature type="region of interest" description="Disordered" evidence="5">
    <location>
        <begin position="166"/>
        <end position="387"/>
    </location>
</feature>
<feature type="region of interest" description="Disordered" evidence="5">
    <location>
        <begin position="414"/>
        <end position="437"/>
    </location>
</feature>
<feature type="region of interest" description="Disordered" evidence="5">
    <location>
        <begin position="451"/>
        <end position="472"/>
    </location>
</feature>
<feature type="region of interest" description="Disordered" evidence="5">
    <location>
        <begin position="602"/>
        <end position="628"/>
    </location>
</feature>
<feature type="region of interest" description="Disordered" evidence="5">
    <location>
        <begin position="907"/>
        <end position="935"/>
    </location>
</feature>
<feature type="region of interest" description="Disordered" evidence="5">
    <location>
        <begin position="1004"/>
        <end position="1037"/>
    </location>
</feature>
<feature type="coiled-coil region" evidence="2">
    <location>
        <begin position="5"/>
        <end position="35"/>
    </location>
</feature>
<feature type="compositionally biased region" description="Low complexity" evidence="5">
    <location>
        <begin position="114"/>
        <end position="145"/>
    </location>
</feature>
<feature type="compositionally biased region" description="Low complexity" evidence="5">
    <location>
        <begin position="166"/>
        <end position="200"/>
    </location>
</feature>
<feature type="compositionally biased region" description="Polar residues" evidence="5">
    <location>
        <begin position="229"/>
        <end position="239"/>
    </location>
</feature>
<feature type="compositionally biased region" description="Low complexity" evidence="5">
    <location>
        <begin position="240"/>
        <end position="276"/>
    </location>
</feature>
<feature type="compositionally biased region" description="Polar residues" evidence="5">
    <location>
        <begin position="282"/>
        <end position="300"/>
    </location>
</feature>
<feature type="compositionally biased region" description="Low complexity" evidence="5">
    <location>
        <begin position="318"/>
        <end position="360"/>
    </location>
</feature>
<feature type="compositionally biased region" description="Basic and acidic residues" evidence="5">
    <location>
        <begin position="361"/>
        <end position="370"/>
    </location>
</feature>
<feature type="compositionally biased region" description="Polar residues" evidence="5">
    <location>
        <begin position="372"/>
        <end position="387"/>
    </location>
</feature>
<feature type="compositionally biased region" description="Polar residues" evidence="5">
    <location>
        <begin position="424"/>
        <end position="437"/>
    </location>
</feature>
<feature type="compositionally biased region" description="Low complexity" evidence="5">
    <location>
        <begin position="907"/>
        <end position="930"/>
    </location>
</feature>
<feature type="compositionally biased region" description="Polar residues" evidence="5">
    <location>
        <begin position="1027"/>
        <end position="1037"/>
    </location>
</feature>
<keyword id="KW-0175">Coiled coil</keyword>
<keyword id="KW-0344">Guanine-nucleotide releasing factor</keyword>
<keyword id="KW-1185">Reference proteome</keyword>
<gene>
    <name type="primary">gefE</name>
    <name type="synonym">rasGEFE</name>
    <name type="ORF">DDB_G0269252</name>
</gene>
<accession>Q8IS18</accession>
<accession>Q55CK1</accession>
<protein>
    <recommendedName>
        <fullName>Ras guanine nucleotide exchange factor E</fullName>
    </recommendedName>
    <alternativeName>
        <fullName>RasGEF domain-containing protein E</fullName>
    </alternativeName>
</protein>
<dbReference type="EMBL" id="AY160094">
    <property type="protein sequence ID" value="AAN46874.1"/>
    <property type="molecule type" value="Genomic_DNA"/>
</dbReference>
<dbReference type="EMBL" id="AAFI02000005">
    <property type="protein sequence ID" value="EAL71976.1"/>
    <property type="molecule type" value="Genomic_DNA"/>
</dbReference>
<dbReference type="RefSeq" id="XP_646480.1">
    <property type="nucleotide sequence ID" value="XM_641388.1"/>
</dbReference>
<dbReference type="SMR" id="Q8IS18"/>
<dbReference type="STRING" id="44689.Q8IS18"/>
<dbReference type="GlyGen" id="Q8IS18">
    <property type="glycosylation" value="3 sites"/>
</dbReference>
<dbReference type="PaxDb" id="44689-DDB0191289"/>
<dbReference type="EnsemblProtists" id="EAL71976">
    <property type="protein sequence ID" value="EAL71976"/>
    <property type="gene ID" value="DDB_G0269252"/>
</dbReference>
<dbReference type="GeneID" id="8617442"/>
<dbReference type="KEGG" id="ddi:DDB_G0269252"/>
<dbReference type="dictyBase" id="DDB_G0269252">
    <property type="gene designation" value="gefE"/>
</dbReference>
<dbReference type="VEuPathDB" id="AmoebaDB:DDB_G0269252"/>
<dbReference type="eggNOG" id="KOG3417">
    <property type="taxonomic scope" value="Eukaryota"/>
</dbReference>
<dbReference type="HOGENOM" id="CLU_293285_0_0_1"/>
<dbReference type="InParanoid" id="Q8IS18"/>
<dbReference type="OMA" id="CNNRIEY"/>
<dbReference type="PhylomeDB" id="Q8IS18"/>
<dbReference type="Reactome" id="R-DDI-193648">
    <property type="pathway name" value="NRAGE signals death through JNK"/>
</dbReference>
<dbReference type="Reactome" id="R-DDI-9013148">
    <property type="pathway name" value="CDC42 GTPase cycle"/>
</dbReference>
<dbReference type="Reactome" id="R-DDI-9013149">
    <property type="pathway name" value="RAC1 GTPase cycle"/>
</dbReference>
<dbReference type="PRO" id="PR:Q8IS18"/>
<dbReference type="Proteomes" id="UP000002195">
    <property type="component" value="Chromosome 1"/>
</dbReference>
<dbReference type="GO" id="GO:0005886">
    <property type="term" value="C:plasma membrane"/>
    <property type="evidence" value="ECO:0000318"/>
    <property type="project" value="GO_Central"/>
</dbReference>
<dbReference type="GO" id="GO:0005085">
    <property type="term" value="F:guanyl-nucleotide exchange factor activity"/>
    <property type="evidence" value="ECO:0000315"/>
    <property type="project" value="dictyBase"/>
</dbReference>
<dbReference type="GO" id="GO:1903014">
    <property type="term" value="P:cellular response to differentiation-inducing factor 1"/>
    <property type="evidence" value="ECO:0000315"/>
    <property type="project" value="dictyBase"/>
</dbReference>
<dbReference type="GO" id="GO:0046956">
    <property type="term" value="P:positive phototaxis"/>
    <property type="evidence" value="ECO:0000315"/>
    <property type="project" value="dictyBase"/>
</dbReference>
<dbReference type="GO" id="GO:0034504">
    <property type="term" value="P:protein localization to nucleus"/>
    <property type="evidence" value="ECO:0000315"/>
    <property type="project" value="dictyBase"/>
</dbReference>
<dbReference type="GO" id="GO:0007265">
    <property type="term" value="P:Ras protein signal transduction"/>
    <property type="evidence" value="ECO:0000315"/>
    <property type="project" value="dictyBase"/>
</dbReference>
<dbReference type="GO" id="GO:0043052">
    <property type="term" value="P:thermotaxis"/>
    <property type="evidence" value="ECO:0000315"/>
    <property type="project" value="dictyBase"/>
</dbReference>
<dbReference type="CDD" id="cd00155">
    <property type="entry name" value="RasGEF"/>
    <property type="match status" value="1"/>
</dbReference>
<dbReference type="CDD" id="cd06224">
    <property type="entry name" value="REM"/>
    <property type="match status" value="1"/>
</dbReference>
<dbReference type="Gene3D" id="1.10.840.10">
    <property type="entry name" value="Ras guanine-nucleotide exchange factors catalytic domain"/>
    <property type="match status" value="1"/>
</dbReference>
<dbReference type="Gene3D" id="1.20.870.10">
    <property type="entry name" value="Son of sevenless (SoS) protein Chain: S domain 1"/>
    <property type="match status" value="2"/>
</dbReference>
<dbReference type="InterPro" id="IPR008937">
    <property type="entry name" value="Ras-like_GEF"/>
</dbReference>
<dbReference type="InterPro" id="IPR000651">
    <property type="entry name" value="Ras-like_Gua-exchang_fac_N"/>
</dbReference>
<dbReference type="InterPro" id="IPR023578">
    <property type="entry name" value="Ras_GEF_dom_sf"/>
</dbReference>
<dbReference type="InterPro" id="IPR001895">
    <property type="entry name" value="RASGEF_cat_dom"/>
</dbReference>
<dbReference type="InterPro" id="IPR036964">
    <property type="entry name" value="RASGEF_cat_dom_sf"/>
</dbReference>
<dbReference type="PANTHER" id="PTHR23113">
    <property type="entry name" value="GUANINE NUCLEOTIDE EXCHANGE FACTOR"/>
    <property type="match status" value="1"/>
</dbReference>
<dbReference type="PANTHER" id="PTHR23113:SF362">
    <property type="entry name" value="RAS GUANINE NUCLEOTIDE EXCHANGE FACTOR E"/>
    <property type="match status" value="1"/>
</dbReference>
<dbReference type="Pfam" id="PF00617">
    <property type="entry name" value="RasGEF"/>
    <property type="match status" value="1"/>
</dbReference>
<dbReference type="Pfam" id="PF00618">
    <property type="entry name" value="RasGEF_N"/>
    <property type="match status" value="1"/>
</dbReference>
<dbReference type="SMART" id="SM00147">
    <property type="entry name" value="RasGEF"/>
    <property type="match status" value="1"/>
</dbReference>
<dbReference type="SMART" id="SM00229">
    <property type="entry name" value="RasGEFN"/>
    <property type="match status" value="1"/>
</dbReference>
<dbReference type="SUPFAM" id="SSF48366">
    <property type="entry name" value="Ras GEF"/>
    <property type="match status" value="1"/>
</dbReference>
<dbReference type="PROSITE" id="PS50009">
    <property type="entry name" value="RASGEF_CAT"/>
    <property type="match status" value="1"/>
</dbReference>
<dbReference type="PROSITE" id="PS50212">
    <property type="entry name" value="RASGEF_NTER"/>
    <property type="match status" value="1"/>
</dbReference>
<reference key="1">
    <citation type="journal article" date="2005" name="Genome Biol.">
        <title>The Dictyostelium genome encodes numerous RasGEFs with multiple biological roles.</title>
        <authorList>
            <person name="Wilkins A."/>
            <person name="Szafranski K."/>
            <person name="Fraser D.J."/>
            <person name="Bakthavatsalam D."/>
            <person name="Mueller R."/>
            <person name="Fisher P.R."/>
            <person name="Gloeckner G."/>
            <person name="Eichinger L."/>
            <person name="Noegel A.A."/>
            <person name="Insall R.H."/>
        </authorList>
    </citation>
    <scope>NUCLEOTIDE SEQUENCE [GENOMIC DNA]</scope>
    <scope>DEVELOPMENTAL STAGE</scope>
    <scope>DISRUPTION PHENOTYPE</scope>
    <source>
        <strain>AX4</strain>
    </source>
</reference>
<reference key="2">
    <citation type="journal article" date="2005" name="Nature">
        <title>The genome of the social amoeba Dictyostelium discoideum.</title>
        <authorList>
            <person name="Eichinger L."/>
            <person name="Pachebat J.A."/>
            <person name="Gloeckner G."/>
            <person name="Rajandream M.A."/>
            <person name="Sucgang R."/>
            <person name="Berriman M."/>
            <person name="Song J."/>
            <person name="Olsen R."/>
            <person name="Szafranski K."/>
            <person name="Xu Q."/>
            <person name="Tunggal B."/>
            <person name="Kummerfeld S."/>
            <person name="Madera M."/>
            <person name="Konfortov B.A."/>
            <person name="Rivero F."/>
            <person name="Bankier A.T."/>
            <person name="Lehmann R."/>
            <person name="Hamlin N."/>
            <person name="Davies R."/>
            <person name="Gaudet P."/>
            <person name="Fey P."/>
            <person name="Pilcher K."/>
            <person name="Chen G."/>
            <person name="Saunders D."/>
            <person name="Sodergren E.J."/>
            <person name="Davis P."/>
            <person name="Kerhornou A."/>
            <person name="Nie X."/>
            <person name="Hall N."/>
            <person name="Anjard C."/>
            <person name="Hemphill L."/>
            <person name="Bason N."/>
            <person name="Farbrother P."/>
            <person name="Desany B."/>
            <person name="Just E."/>
            <person name="Morio T."/>
            <person name="Rost R."/>
            <person name="Churcher C.M."/>
            <person name="Cooper J."/>
            <person name="Haydock S."/>
            <person name="van Driessche N."/>
            <person name="Cronin A."/>
            <person name="Goodhead I."/>
            <person name="Muzny D.M."/>
            <person name="Mourier T."/>
            <person name="Pain A."/>
            <person name="Lu M."/>
            <person name="Harper D."/>
            <person name="Lindsay R."/>
            <person name="Hauser H."/>
            <person name="James K.D."/>
            <person name="Quiles M."/>
            <person name="Madan Babu M."/>
            <person name="Saito T."/>
            <person name="Buchrieser C."/>
            <person name="Wardroper A."/>
            <person name="Felder M."/>
            <person name="Thangavelu M."/>
            <person name="Johnson D."/>
            <person name="Knights A."/>
            <person name="Loulseged H."/>
            <person name="Mungall K.L."/>
            <person name="Oliver K."/>
            <person name="Price C."/>
            <person name="Quail M.A."/>
            <person name="Urushihara H."/>
            <person name="Hernandez J."/>
            <person name="Rabbinowitsch E."/>
            <person name="Steffen D."/>
            <person name="Sanders M."/>
            <person name="Ma J."/>
            <person name="Kohara Y."/>
            <person name="Sharp S."/>
            <person name="Simmonds M.N."/>
            <person name="Spiegler S."/>
            <person name="Tivey A."/>
            <person name="Sugano S."/>
            <person name="White B."/>
            <person name="Walker D."/>
            <person name="Woodward J.R."/>
            <person name="Winckler T."/>
            <person name="Tanaka Y."/>
            <person name="Shaulsky G."/>
            <person name="Schleicher M."/>
            <person name="Weinstock G.M."/>
            <person name="Rosenthal A."/>
            <person name="Cox E.C."/>
            <person name="Chisholm R.L."/>
            <person name="Gibbs R.A."/>
            <person name="Loomis W.F."/>
            <person name="Platzer M."/>
            <person name="Kay R.R."/>
            <person name="Williams J.G."/>
            <person name="Dear P.H."/>
            <person name="Noegel A.A."/>
            <person name="Barrell B.G."/>
            <person name="Kuspa A."/>
        </authorList>
    </citation>
    <scope>NUCLEOTIDE SEQUENCE [LARGE SCALE GENOMIC DNA]</scope>
    <source>
        <strain>AX4</strain>
    </source>
</reference>
<reference key="3">
    <citation type="journal article" date="2005" name="Bioinformatics">
        <title>Microarray phenotyping in Dictyostelium reveals a regulon of chemotaxis genes.</title>
        <authorList>
            <person name="Booth E.O."/>
            <person name="Van Driessche N."/>
            <person name="Zhuchenko O."/>
            <person name="Kuspa A."/>
            <person name="Shaulsky G."/>
        </authorList>
    </citation>
    <scope>FUNCTION</scope>
</reference>